<accession>Q99K28</accession>
<accession>Q9D758</accession>
<accession>Q9JIH1</accession>
<sequence length="520" mass="56598">MAASPSKTEIQTIFKRLRAIPTNKACFDCGAKSPSWASITYGVFLCIDCSGVHRSLGVHLSFIRSTELDSNWSWLQLRCMQVGGNANATAFFRQHGCMANDANTKYTSRAAQMYREKIRQLGSAALTRHGTDLWIDSMNSAPSHSPEKKDSDFFTEHTQAPAWDTAATDPSGTQQPALPSESSSLAQPEQGPNTDLLGTSPQASLELKSSIIGKKKPAAAKKGLGAKKGLGAQKVSNQSFTEIERQAQVAEKLREQQAADAKKQAEESMVASMRLAYQELQIDRKKEEKKLQNLEGKKREQAERLGMGLVSRSSISHSVLSEMQMIEQETPLSAKSSRSQLDLFDDVGTFASGPPKYKDNPFSLGETFGSRWDSDAAWGMDRVEEKEPEVTISSIRPISERTASRREVETRSSGLESSEARQKFAGAKAISSDMFFGREVDSEYEARSRLQQLSGSSAISSSDLFGNMDGAHGGGTVSLGNVLPTADIAQFKQGVKSVAGKMAVLANGVMNSLQDRYGSY</sequence>
<feature type="initiator methionine" description="Removed" evidence="2">
    <location>
        <position position="1"/>
    </location>
</feature>
<feature type="chain" id="PRO_0000278469" description="ADP-ribosylation factor GTPase-activating protein 2">
    <location>
        <begin position="2"/>
        <end position="520"/>
    </location>
</feature>
<feature type="domain" description="Arf-GAP" evidence="4">
    <location>
        <begin position="11"/>
        <end position="127"/>
    </location>
</feature>
<feature type="zinc finger region" description="C4-type" evidence="4">
    <location>
        <begin position="26"/>
        <end position="49"/>
    </location>
</feature>
<feature type="region of interest" description="Required for interaction with coatomer" evidence="1">
    <location>
        <begin position="97"/>
        <end position="520"/>
    </location>
</feature>
<feature type="region of interest" description="Disordered" evidence="5">
    <location>
        <begin position="163"/>
        <end position="200"/>
    </location>
</feature>
<feature type="coiled-coil region" evidence="3">
    <location>
        <begin position="241"/>
        <end position="307"/>
    </location>
</feature>
<feature type="compositionally biased region" description="Polar residues" evidence="5">
    <location>
        <begin position="168"/>
        <end position="200"/>
    </location>
</feature>
<feature type="modified residue" description="N-acetylalanine" evidence="2">
    <location>
        <position position="2"/>
    </location>
</feature>
<feature type="modified residue" description="Phosphoserine" evidence="2">
    <location>
        <position position="140"/>
    </location>
</feature>
<feature type="modified residue" description="Phosphoserine" evidence="9 10">
    <location>
        <position position="145"/>
    </location>
</feature>
<feature type="modified residue" description="Phosphoserine" evidence="2">
    <location>
        <position position="200"/>
    </location>
</feature>
<feature type="modified residue" description="Phosphoserine" evidence="2">
    <location>
        <position position="236"/>
    </location>
</feature>
<feature type="modified residue" description="Phosphoserine" evidence="9 10">
    <location>
        <position position="239"/>
    </location>
</feature>
<feature type="modified residue" description="Phosphoserine" evidence="2">
    <location>
        <position position="311"/>
    </location>
</feature>
<feature type="modified residue" description="Phosphoserine" evidence="2">
    <location>
        <position position="333"/>
    </location>
</feature>
<feature type="modified residue" description="Phosphoserine" evidence="10">
    <location>
        <position position="339"/>
    </location>
</feature>
<feature type="modified residue" description="Phosphoserine" evidence="2">
    <location>
        <position position="363"/>
    </location>
</feature>
<feature type="modified residue" description="Phosphoserine" evidence="2">
    <location>
        <position position="431"/>
    </location>
</feature>
<feature type="modified residue" description="Phosphoserine" evidence="2">
    <location>
        <position position="432"/>
    </location>
</feature>
<feature type="modified residue" description="Phosphoserine" evidence="2">
    <location>
        <position position="512"/>
    </location>
</feature>
<feature type="splice variant" id="VSP_023305" description="In isoform 2." evidence="7">
    <original>E</original>
    <variation>ESMYLSAKGPSCTRE</variation>
    <location>
        <position position="206"/>
    </location>
</feature>
<feature type="sequence conflict" description="In Ref. 1; AAF91258." evidence="8" ref="1">
    <original>N</original>
    <variation>D</variation>
    <location>
        <position position="467"/>
    </location>
</feature>
<keyword id="KW-0007">Acetylation</keyword>
<keyword id="KW-0025">Alternative splicing</keyword>
<keyword id="KW-0175">Coiled coil</keyword>
<keyword id="KW-0963">Cytoplasm</keyword>
<keyword id="KW-0931">ER-Golgi transport</keyword>
<keyword id="KW-0333">Golgi apparatus</keyword>
<keyword id="KW-0343">GTPase activation</keyword>
<keyword id="KW-0472">Membrane</keyword>
<keyword id="KW-0479">Metal-binding</keyword>
<keyword id="KW-0597">Phosphoprotein</keyword>
<keyword id="KW-0653">Protein transport</keyword>
<keyword id="KW-1185">Reference proteome</keyword>
<keyword id="KW-0813">Transport</keyword>
<keyword id="KW-0862">Zinc</keyword>
<keyword id="KW-0863">Zinc-finger</keyword>
<name>ARFG2_MOUSE</name>
<organism>
    <name type="scientific">Mus musculus</name>
    <name type="common">Mouse</name>
    <dbReference type="NCBI Taxonomy" id="10090"/>
    <lineage>
        <taxon>Eukaryota</taxon>
        <taxon>Metazoa</taxon>
        <taxon>Chordata</taxon>
        <taxon>Craniata</taxon>
        <taxon>Vertebrata</taxon>
        <taxon>Euteleostomi</taxon>
        <taxon>Mammalia</taxon>
        <taxon>Eutheria</taxon>
        <taxon>Euarchontoglires</taxon>
        <taxon>Glires</taxon>
        <taxon>Rodentia</taxon>
        <taxon>Myomorpha</taxon>
        <taxon>Muroidea</taxon>
        <taxon>Muridae</taxon>
        <taxon>Murinae</taxon>
        <taxon>Mus</taxon>
        <taxon>Mus</taxon>
    </lineage>
</organism>
<comment type="function">
    <text evidence="1 6">GTPase-activating protein (GAP) for ADP ribosylation factor 1 (ARF1). May regulate coatomer-mediated protein transport from the Golgi complex to the endoplasmic reticulum. Hydrolysis of ARF1-bound GTP may lead to dissociation of coatomer from Golgi-derived membranes to allow fusion with target membranes (By similarity).</text>
</comment>
<comment type="subunit">
    <text evidence="1">Interacts with the coatomer complex. Interacts with the C-terminal appendage domain of COPG1 (By similarity).</text>
</comment>
<comment type="subcellular location">
    <subcellularLocation>
        <location evidence="1">Cytoplasm</location>
    </subcellularLocation>
    <subcellularLocation>
        <location evidence="1">Golgi apparatus membrane</location>
        <topology evidence="1">Peripheral membrane protein</topology>
        <orientation evidence="1">Cytoplasmic side</orientation>
    </subcellularLocation>
    <text evidence="1">Also found on peripheral punctate structures likely to be endoplasmic reticulum-Golgi intermediate compartment.</text>
</comment>
<comment type="alternative products">
    <event type="alternative splicing"/>
    <isoform>
        <id>Q99K28-1</id>
        <name>1</name>
        <sequence type="displayed"/>
    </isoform>
    <isoform>
        <id>Q99K28-2</id>
        <name>2</name>
        <sequence type="described" ref="VSP_023305"/>
    </isoform>
</comment>
<comment type="tissue specificity">
    <text evidence="6">Highly expressed in liver, heart and kidney. Low expression in skeletal muscle and spleen.</text>
</comment>
<comment type="developmental stage">
    <text evidence="6">High levels in mammary glands of virgin mice and in mammary glands of pregnant mice associated with extensive proliferation of ductal cells and lobulo-alveolar development. Expression declines at the beginning of lactation when the glands fully differentiate. No expression after day 2 of lactation until day 21. Expression may be controlled by ID1.</text>
</comment>
<protein>
    <recommendedName>
        <fullName>ADP-ribosylation factor GTPase-activating protein 2</fullName>
        <shortName>ARF GAP 2</shortName>
    </recommendedName>
    <alternativeName>
        <fullName>GTPase-activating protein ZNF289</fullName>
    </alternativeName>
    <alternativeName>
        <fullName>Zinc finger protein 289</fullName>
    </alternativeName>
</protein>
<gene>
    <name type="primary">Arfgap2</name>
    <name type="synonym">Zfp289</name>
    <name type="synonym">Znf289</name>
</gene>
<evidence type="ECO:0000250" key="1"/>
<evidence type="ECO:0000250" key="2">
    <source>
        <dbReference type="UniProtKB" id="Q8N6H7"/>
    </source>
</evidence>
<evidence type="ECO:0000255" key="3"/>
<evidence type="ECO:0000255" key="4">
    <source>
        <dbReference type="PROSITE-ProRule" id="PRU00288"/>
    </source>
</evidence>
<evidence type="ECO:0000256" key="5">
    <source>
        <dbReference type="SAM" id="MobiDB-lite"/>
    </source>
</evidence>
<evidence type="ECO:0000269" key="6">
    <source>
    </source>
</evidence>
<evidence type="ECO:0000303" key="7">
    <source>
    </source>
</evidence>
<evidence type="ECO:0000305" key="8"/>
<evidence type="ECO:0007744" key="9">
    <source>
    </source>
</evidence>
<evidence type="ECO:0007744" key="10">
    <source>
    </source>
</evidence>
<proteinExistence type="evidence at protein level"/>
<reference key="1">
    <citation type="journal article" date="2001" name="J. Biol. Chem.">
        <title>Molecular cloning and characterization of a zinc finger protein involved in Id-1-stimulated mammary epithelial cell growth.</title>
        <authorList>
            <person name="Singh J."/>
            <person name="Itahana Y."/>
            <person name="Parrinello S."/>
            <person name="Murata K."/>
            <person name="Desprez P.-Y."/>
        </authorList>
    </citation>
    <scope>NUCLEOTIDE SEQUENCE [MRNA] (ISOFORM 1)</scope>
    <scope>FUNCTION</scope>
    <scope>TISSUE SPECIFICITY</scope>
    <scope>DEVELOPMENTAL STAGE</scope>
    <source>
        <tissue>Mammary epithelium</tissue>
    </source>
</reference>
<reference key="2">
    <citation type="journal article" date="2005" name="Science">
        <title>The transcriptional landscape of the mammalian genome.</title>
        <authorList>
            <person name="Carninci P."/>
            <person name="Kasukawa T."/>
            <person name="Katayama S."/>
            <person name="Gough J."/>
            <person name="Frith M.C."/>
            <person name="Maeda N."/>
            <person name="Oyama R."/>
            <person name="Ravasi T."/>
            <person name="Lenhard B."/>
            <person name="Wells C."/>
            <person name="Kodzius R."/>
            <person name="Shimokawa K."/>
            <person name="Bajic V.B."/>
            <person name="Brenner S.E."/>
            <person name="Batalov S."/>
            <person name="Forrest A.R."/>
            <person name="Zavolan M."/>
            <person name="Davis M.J."/>
            <person name="Wilming L.G."/>
            <person name="Aidinis V."/>
            <person name="Allen J.E."/>
            <person name="Ambesi-Impiombato A."/>
            <person name="Apweiler R."/>
            <person name="Aturaliya R.N."/>
            <person name="Bailey T.L."/>
            <person name="Bansal M."/>
            <person name="Baxter L."/>
            <person name="Beisel K.W."/>
            <person name="Bersano T."/>
            <person name="Bono H."/>
            <person name="Chalk A.M."/>
            <person name="Chiu K.P."/>
            <person name="Choudhary V."/>
            <person name="Christoffels A."/>
            <person name="Clutterbuck D.R."/>
            <person name="Crowe M.L."/>
            <person name="Dalla E."/>
            <person name="Dalrymple B.P."/>
            <person name="de Bono B."/>
            <person name="Della Gatta G."/>
            <person name="di Bernardo D."/>
            <person name="Down T."/>
            <person name="Engstrom P."/>
            <person name="Fagiolini M."/>
            <person name="Faulkner G."/>
            <person name="Fletcher C.F."/>
            <person name="Fukushima T."/>
            <person name="Furuno M."/>
            <person name="Futaki S."/>
            <person name="Gariboldi M."/>
            <person name="Georgii-Hemming P."/>
            <person name="Gingeras T.R."/>
            <person name="Gojobori T."/>
            <person name="Green R.E."/>
            <person name="Gustincich S."/>
            <person name="Harbers M."/>
            <person name="Hayashi Y."/>
            <person name="Hensch T.K."/>
            <person name="Hirokawa N."/>
            <person name="Hill D."/>
            <person name="Huminiecki L."/>
            <person name="Iacono M."/>
            <person name="Ikeo K."/>
            <person name="Iwama A."/>
            <person name="Ishikawa T."/>
            <person name="Jakt M."/>
            <person name="Kanapin A."/>
            <person name="Katoh M."/>
            <person name="Kawasawa Y."/>
            <person name="Kelso J."/>
            <person name="Kitamura H."/>
            <person name="Kitano H."/>
            <person name="Kollias G."/>
            <person name="Krishnan S.P."/>
            <person name="Kruger A."/>
            <person name="Kummerfeld S.K."/>
            <person name="Kurochkin I.V."/>
            <person name="Lareau L.F."/>
            <person name="Lazarevic D."/>
            <person name="Lipovich L."/>
            <person name="Liu J."/>
            <person name="Liuni S."/>
            <person name="McWilliam S."/>
            <person name="Madan Babu M."/>
            <person name="Madera M."/>
            <person name="Marchionni L."/>
            <person name="Matsuda H."/>
            <person name="Matsuzawa S."/>
            <person name="Miki H."/>
            <person name="Mignone F."/>
            <person name="Miyake S."/>
            <person name="Morris K."/>
            <person name="Mottagui-Tabar S."/>
            <person name="Mulder N."/>
            <person name="Nakano N."/>
            <person name="Nakauchi H."/>
            <person name="Ng P."/>
            <person name="Nilsson R."/>
            <person name="Nishiguchi S."/>
            <person name="Nishikawa S."/>
            <person name="Nori F."/>
            <person name="Ohara O."/>
            <person name="Okazaki Y."/>
            <person name="Orlando V."/>
            <person name="Pang K.C."/>
            <person name="Pavan W.J."/>
            <person name="Pavesi G."/>
            <person name="Pesole G."/>
            <person name="Petrovsky N."/>
            <person name="Piazza S."/>
            <person name="Reed J."/>
            <person name="Reid J.F."/>
            <person name="Ring B.Z."/>
            <person name="Ringwald M."/>
            <person name="Rost B."/>
            <person name="Ruan Y."/>
            <person name="Salzberg S.L."/>
            <person name="Sandelin A."/>
            <person name="Schneider C."/>
            <person name="Schoenbach C."/>
            <person name="Sekiguchi K."/>
            <person name="Semple C.A."/>
            <person name="Seno S."/>
            <person name="Sessa L."/>
            <person name="Sheng Y."/>
            <person name="Shibata Y."/>
            <person name="Shimada H."/>
            <person name="Shimada K."/>
            <person name="Silva D."/>
            <person name="Sinclair B."/>
            <person name="Sperling S."/>
            <person name="Stupka E."/>
            <person name="Sugiura K."/>
            <person name="Sultana R."/>
            <person name="Takenaka Y."/>
            <person name="Taki K."/>
            <person name="Tammoja K."/>
            <person name="Tan S.L."/>
            <person name="Tang S."/>
            <person name="Taylor M.S."/>
            <person name="Tegner J."/>
            <person name="Teichmann S.A."/>
            <person name="Ueda H.R."/>
            <person name="van Nimwegen E."/>
            <person name="Verardo R."/>
            <person name="Wei C.L."/>
            <person name="Yagi K."/>
            <person name="Yamanishi H."/>
            <person name="Zabarovsky E."/>
            <person name="Zhu S."/>
            <person name="Zimmer A."/>
            <person name="Hide W."/>
            <person name="Bult C."/>
            <person name="Grimmond S.M."/>
            <person name="Teasdale R.D."/>
            <person name="Liu E.T."/>
            <person name="Brusic V."/>
            <person name="Quackenbush J."/>
            <person name="Wahlestedt C."/>
            <person name="Mattick J.S."/>
            <person name="Hume D.A."/>
            <person name="Kai C."/>
            <person name="Sasaki D."/>
            <person name="Tomaru Y."/>
            <person name="Fukuda S."/>
            <person name="Kanamori-Katayama M."/>
            <person name="Suzuki M."/>
            <person name="Aoki J."/>
            <person name="Arakawa T."/>
            <person name="Iida J."/>
            <person name="Imamura K."/>
            <person name="Itoh M."/>
            <person name="Kato T."/>
            <person name="Kawaji H."/>
            <person name="Kawagashira N."/>
            <person name="Kawashima T."/>
            <person name="Kojima M."/>
            <person name="Kondo S."/>
            <person name="Konno H."/>
            <person name="Nakano K."/>
            <person name="Ninomiya N."/>
            <person name="Nishio T."/>
            <person name="Okada M."/>
            <person name="Plessy C."/>
            <person name="Shibata K."/>
            <person name="Shiraki T."/>
            <person name="Suzuki S."/>
            <person name="Tagami M."/>
            <person name="Waki K."/>
            <person name="Watahiki A."/>
            <person name="Okamura-Oho Y."/>
            <person name="Suzuki H."/>
            <person name="Kawai J."/>
            <person name="Hayashizaki Y."/>
        </authorList>
    </citation>
    <scope>NUCLEOTIDE SEQUENCE [LARGE SCALE MRNA] (ISOFORMS 1 AND 2)</scope>
    <source>
        <strain>C57BL/6J</strain>
        <tissue>Amnion</tissue>
        <tissue>Bone marrow</tissue>
        <tissue>Heart</tissue>
    </source>
</reference>
<reference key="3">
    <citation type="journal article" date="2009" name="PLoS Biol.">
        <title>Lineage-specific biology revealed by a finished genome assembly of the mouse.</title>
        <authorList>
            <person name="Church D.M."/>
            <person name="Goodstadt L."/>
            <person name="Hillier L.W."/>
            <person name="Zody M.C."/>
            <person name="Goldstein S."/>
            <person name="She X."/>
            <person name="Bult C.J."/>
            <person name="Agarwala R."/>
            <person name="Cherry J.L."/>
            <person name="DiCuccio M."/>
            <person name="Hlavina W."/>
            <person name="Kapustin Y."/>
            <person name="Meric P."/>
            <person name="Maglott D."/>
            <person name="Birtle Z."/>
            <person name="Marques A.C."/>
            <person name="Graves T."/>
            <person name="Zhou S."/>
            <person name="Teague B."/>
            <person name="Potamousis K."/>
            <person name="Churas C."/>
            <person name="Place M."/>
            <person name="Herschleb J."/>
            <person name="Runnheim R."/>
            <person name="Forrest D."/>
            <person name="Amos-Landgraf J."/>
            <person name="Schwartz D.C."/>
            <person name="Cheng Z."/>
            <person name="Lindblad-Toh K."/>
            <person name="Eichler E.E."/>
            <person name="Ponting C.P."/>
        </authorList>
    </citation>
    <scope>NUCLEOTIDE SEQUENCE [LARGE SCALE GENOMIC DNA]</scope>
    <source>
        <strain>C57BL/6J</strain>
    </source>
</reference>
<reference key="4">
    <citation type="journal article" date="2004" name="Genome Res.">
        <title>The status, quality, and expansion of the NIH full-length cDNA project: the Mammalian Gene Collection (MGC).</title>
        <authorList>
            <consortium name="The MGC Project Team"/>
        </authorList>
    </citation>
    <scope>NUCLEOTIDE SEQUENCE [LARGE SCALE MRNA] (ISOFORM 1)</scope>
    <source>
        <tissue>Mammary tumor</tissue>
    </source>
</reference>
<reference key="5">
    <citation type="journal article" date="2007" name="Proc. Natl. Acad. Sci. U.S.A.">
        <title>Large-scale phosphorylation analysis of mouse liver.</title>
        <authorList>
            <person name="Villen J."/>
            <person name="Beausoleil S.A."/>
            <person name="Gerber S.A."/>
            <person name="Gygi S.P."/>
        </authorList>
    </citation>
    <scope>PHOSPHORYLATION [LARGE SCALE ANALYSIS] AT SER-145 AND SER-239</scope>
    <scope>IDENTIFICATION BY MASS SPECTROMETRY [LARGE SCALE ANALYSIS]</scope>
    <source>
        <tissue>Liver</tissue>
    </source>
</reference>
<reference key="6">
    <citation type="journal article" date="2010" name="Cell">
        <title>A tissue-specific atlas of mouse protein phosphorylation and expression.</title>
        <authorList>
            <person name="Huttlin E.L."/>
            <person name="Jedrychowski M.P."/>
            <person name="Elias J.E."/>
            <person name="Goswami T."/>
            <person name="Rad R."/>
            <person name="Beausoleil S.A."/>
            <person name="Villen J."/>
            <person name="Haas W."/>
            <person name="Sowa M.E."/>
            <person name="Gygi S.P."/>
        </authorList>
    </citation>
    <scope>PHOSPHORYLATION [LARGE SCALE ANALYSIS] AT SER-145; SER-239 AND SER-339</scope>
    <scope>IDENTIFICATION BY MASS SPECTROMETRY [LARGE SCALE ANALYSIS]</scope>
    <source>
        <tissue>Brain</tissue>
        <tissue>Heart</tissue>
        <tissue>Kidney</tissue>
        <tissue>Liver</tissue>
        <tissue>Lung</tissue>
        <tissue>Pancreas</tissue>
        <tissue>Spleen</tissue>
        <tissue>Testis</tissue>
    </source>
</reference>
<dbReference type="EMBL" id="AF229439">
    <property type="protein sequence ID" value="AAF91258.1"/>
    <property type="molecule type" value="mRNA"/>
</dbReference>
<dbReference type="EMBL" id="AK009565">
    <property type="protein sequence ID" value="BAB26362.1"/>
    <property type="molecule type" value="mRNA"/>
</dbReference>
<dbReference type="EMBL" id="AK168489">
    <property type="protein sequence ID" value="BAE40376.1"/>
    <property type="molecule type" value="mRNA"/>
</dbReference>
<dbReference type="EMBL" id="AK169144">
    <property type="protein sequence ID" value="BAE40923.1"/>
    <property type="molecule type" value="mRNA"/>
</dbReference>
<dbReference type="EMBL" id="AK149837">
    <property type="protein sequence ID" value="BAE29114.1"/>
    <property type="molecule type" value="mRNA"/>
</dbReference>
<dbReference type="EMBL" id="AL732478">
    <property type="status" value="NOT_ANNOTATED_CDS"/>
    <property type="molecule type" value="Genomic_DNA"/>
</dbReference>
<dbReference type="EMBL" id="BC005495">
    <property type="protein sequence ID" value="AAH05495.1"/>
    <property type="molecule type" value="mRNA"/>
</dbReference>
<dbReference type="CCDS" id="CCDS16430.1">
    <molecule id="Q99K28-1"/>
</dbReference>
<dbReference type="CCDS" id="CCDS50639.1">
    <molecule id="Q99K28-2"/>
</dbReference>
<dbReference type="RefSeq" id="NP_001159496.1">
    <molecule id="Q99K28-2"/>
    <property type="nucleotide sequence ID" value="NM_001166024.1"/>
</dbReference>
<dbReference type="RefSeq" id="NP_076343.2">
    <molecule id="Q99K28-1"/>
    <property type="nucleotide sequence ID" value="NM_023854.2"/>
</dbReference>
<dbReference type="SMR" id="Q99K28"/>
<dbReference type="BioGRID" id="218475">
    <property type="interactions" value="11"/>
</dbReference>
<dbReference type="FunCoup" id="Q99K28">
    <property type="interactions" value="4406"/>
</dbReference>
<dbReference type="IntAct" id="Q99K28">
    <property type="interactions" value="1"/>
</dbReference>
<dbReference type="MINT" id="Q99K28"/>
<dbReference type="STRING" id="10090.ENSMUSP00000028691"/>
<dbReference type="GlyGen" id="Q99K28">
    <property type="glycosylation" value="2 sites, 1 N-linked glycan (1 site), 1 O-linked glycan (1 site)"/>
</dbReference>
<dbReference type="iPTMnet" id="Q99K28"/>
<dbReference type="PhosphoSitePlus" id="Q99K28"/>
<dbReference type="SwissPalm" id="Q99K28"/>
<dbReference type="jPOST" id="Q99K28"/>
<dbReference type="PaxDb" id="10090-ENSMUSP00000028691"/>
<dbReference type="PeptideAtlas" id="Q99K28"/>
<dbReference type="ProteomicsDB" id="277276">
    <molecule id="Q99K28-1"/>
</dbReference>
<dbReference type="ProteomicsDB" id="277277">
    <molecule id="Q99K28-2"/>
</dbReference>
<dbReference type="Pumba" id="Q99K28"/>
<dbReference type="Antibodypedia" id="13559">
    <property type="antibodies" value="183 antibodies from 28 providers"/>
</dbReference>
<dbReference type="DNASU" id="77038"/>
<dbReference type="Ensembl" id="ENSMUST00000028691.7">
    <molecule id="Q99K28-2"/>
    <property type="protein sequence ID" value="ENSMUSP00000028691.7"/>
    <property type="gene ID" value="ENSMUSG00000027255.15"/>
</dbReference>
<dbReference type="Ensembl" id="ENSMUST00000080008.13">
    <molecule id="Q99K28-1"/>
    <property type="protein sequence ID" value="ENSMUSP00000078920.7"/>
    <property type="gene ID" value="ENSMUSG00000027255.15"/>
</dbReference>
<dbReference type="GeneID" id="77038"/>
<dbReference type="KEGG" id="mmu:77038"/>
<dbReference type="UCSC" id="uc008kvq.2">
    <molecule id="Q99K28-1"/>
    <property type="organism name" value="mouse"/>
</dbReference>
<dbReference type="UCSC" id="uc008kvr.2">
    <molecule id="Q99K28-2"/>
    <property type="organism name" value="mouse"/>
</dbReference>
<dbReference type="AGR" id="MGI:1924288"/>
<dbReference type="CTD" id="84364"/>
<dbReference type="MGI" id="MGI:1924288">
    <property type="gene designation" value="Arfgap2"/>
</dbReference>
<dbReference type="VEuPathDB" id="HostDB:ENSMUSG00000027255"/>
<dbReference type="eggNOG" id="KOG0706">
    <property type="taxonomic scope" value="Eukaryota"/>
</dbReference>
<dbReference type="GeneTree" id="ENSGT00940000155568"/>
<dbReference type="HOGENOM" id="CLU_023062_6_2_1"/>
<dbReference type="InParanoid" id="Q99K28"/>
<dbReference type="OMA" id="PANQVCF"/>
<dbReference type="OrthoDB" id="71201at9989"/>
<dbReference type="PhylomeDB" id="Q99K28"/>
<dbReference type="TreeFam" id="TF313985"/>
<dbReference type="Reactome" id="R-MMU-6807878">
    <property type="pathway name" value="COPI-mediated anterograde transport"/>
</dbReference>
<dbReference type="Reactome" id="R-MMU-6811434">
    <property type="pathway name" value="COPI-dependent Golgi-to-ER retrograde traffic"/>
</dbReference>
<dbReference type="BioGRID-ORCS" id="77038">
    <property type="hits" value="2 hits in 75 CRISPR screens"/>
</dbReference>
<dbReference type="CD-CODE" id="CE726F99">
    <property type="entry name" value="Postsynaptic density"/>
</dbReference>
<dbReference type="ChiTaRS" id="Arfgap2">
    <property type="organism name" value="mouse"/>
</dbReference>
<dbReference type="PRO" id="PR:Q99K28"/>
<dbReference type="Proteomes" id="UP000000589">
    <property type="component" value="Chromosome 2"/>
</dbReference>
<dbReference type="RNAct" id="Q99K28">
    <property type="molecule type" value="protein"/>
</dbReference>
<dbReference type="Bgee" id="ENSMUSG00000027255">
    <property type="expression patterns" value="Expressed in hindlimb stylopod muscle and 135 other cell types or tissues"/>
</dbReference>
<dbReference type="GO" id="GO:0005829">
    <property type="term" value="C:cytosol"/>
    <property type="evidence" value="ECO:0007669"/>
    <property type="project" value="Ensembl"/>
</dbReference>
<dbReference type="GO" id="GO:0000139">
    <property type="term" value="C:Golgi membrane"/>
    <property type="evidence" value="ECO:0007669"/>
    <property type="project" value="UniProtKB-SubCell"/>
</dbReference>
<dbReference type="GO" id="GO:0005886">
    <property type="term" value="C:plasma membrane"/>
    <property type="evidence" value="ECO:0007669"/>
    <property type="project" value="Ensembl"/>
</dbReference>
<dbReference type="GO" id="GO:0005096">
    <property type="term" value="F:GTPase activator activity"/>
    <property type="evidence" value="ECO:0007669"/>
    <property type="project" value="UniProtKB-KW"/>
</dbReference>
<dbReference type="GO" id="GO:0008270">
    <property type="term" value="F:zinc ion binding"/>
    <property type="evidence" value="ECO:0007669"/>
    <property type="project" value="UniProtKB-KW"/>
</dbReference>
<dbReference type="GO" id="GO:0015031">
    <property type="term" value="P:protein transport"/>
    <property type="evidence" value="ECO:0007669"/>
    <property type="project" value="UniProtKB-KW"/>
</dbReference>
<dbReference type="GO" id="GO:0016192">
    <property type="term" value="P:vesicle-mediated transport"/>
    <property type="evidence" value="ECO:0007669"/>
    <property type="project" value="UniProtKB-KW"/>
</dbReference>
<dbReference type="CDD" id="cd09029">
    <property type="entry name" value="ArfGap_ArfGap2"/>
    <property type="match status" value="1"/>
</dbReference>
<dbReference type="FunFam" id="1.10.220.150:FF:000004">
    <property type="entry name" value="Putative ADP-ribosylation factor GTPase-activating protein 2"/>
    <property type="match status" value="1"/>
</dbReference>
<dbReference type="Gene3D" id="1.10.220.150">
    <property type="entry name" value="Arf GTPase activating protein"/>
    <property type="match status" value="1"/>
</dbReference>
<dbReference type="InterPro" id="IPR037278">
    <property type="entry name" value="ARFGAP/RecO"/>
</dbReference>
<dbReference type="InterPro" id="IPR001164">
    <property type="entry name" value="ArfGAP_dom"/>
</dbReference>
<dbReference type="InterPro" id="IPR038508">
    <property type="entry name" value="ArfGAP_dom_sf"/>
</dbReference>
<dbReference type="PANTHER" id="PTHR45686">
    <property type="entry name" value="ADP-RIBOSYLATION FACTOR GTPASE ACTIVATING PROTEIN 3, ISOFORM H-RELATED"/>
    <property type="match status" value="1"/>
</dbReference>
<dbReference type="PANTHER" id="PTHR45686:SF10">
    <property type="entry name" value="ADP-RIBOSYLATION FACTOR GTPASE-ACTIVATING PROTEIN 2"/>
    <property type="match status" value="1"/>
</dbReference>
<dbReference type="Pfam" id="PF01412">
    <property type="entry name" value="ArfGap"/>
    <property type="match status" value="1"/>
</dbReference>
<dbReference type="PRINTS" id="PR00405">
    <property type="entry name" value="REVINTRACTNG"/>
</dbReference>
<dbReference type="SMART" id="SM00105">
    <property type="entry name" value="ArfGap"/>
    <property type="match status" value="1"/>
</dbReference>
<dbReference type="SUPFAM" id="SSF57863">
    <property type="entry name" value="ArfGap/RecO-like zinc finger"/>
    <property type="match status" value="1"/>
</dbReference>
<dbReference type="PROSITE" id="PS50115">
    <property type="entry name" value="ARFGAP"/>
    <property type="match status" value="1"/>
</dbReference>